<protein>
    <recommendedName>
        <fullName evidence="1">Nucleoid-associated protein OCAR_7544/OCA5_c05960</fullName>
    </recommendedName>
</protein>
<sequence length="105" mass="11440">MADFLGMMKQAAQLQSKMKEMQEQLDQVEVEGSAGGSMVTVRMTAKMELKAVSIDPSLMKPEEREVLEDLLVAAQNDARRKAEEAMQERMKALTGGLSIPGLGLG</sequence>
<evidence type="ECO:0000255" key="1">
    <source>
        <dbReference type="HAMAP-Rule" id="MF_00274"/>
    </source>
</evidence>
<accession>B6JJQ2</accession>
<accession>F8BWW8</accession>
<gene>
    <name type="ordered locus">OCAR_7544</name>
    <name type="ordered locus">OCA5_c05960</name>
</gene>
<proteinExistence type="inferred from homology"/>
<name>Y7544_AFIC5</name>
<comment type="function">
    <text evidence="1">Binds to DNA and alters its conformation. May be involved in regulation of gene expression, nucleoid organization and DNA protection.</text>
</comment>
<comment type="subunit">
    <text evidence="1">Homodimer.</text>
</comment>
<comment type="subcellular location">
    <subcellularLocation>
        <location evidence="1">Cytoplasm</location>
        <location evidence="1">Nucleoid</location>
    </subcellularLocation>
</comment>
<comment type="similarity">
    <text evidence="1">Belongs to the YbaB/EbfC family.</text>
</comment>
<keyword id="KW-0963">Cytoplasm</keyword>
<keyword id="KW-0238">DNA-binding</keyword>
<keyword id="KW-1185">Reference proteome</keyword>
<reference key="1">
    <citation type="journal article" date="2008" name="J. Bacteriol.">
        <title>Genome sequence of the chemolithoautotrophic bacterium Oligotropha carboxidovorans OM5T.</title>
        <authorList>
            <person name="Paul D."/>
            <person name="Bridges S."/>
            <person name="Burgess S.C."/>
            <person name="Dandass Y."/>
            <person name="Lawrence M.L."/>
        </authorList>
    </citation>
    <scope>NUCLEOTIDE SEQUENCE [LARGE SCALE GENOMIC DNA]</scope>
    <source>
        <strain>ATCC 49405 / DSM 1227 / KCTC 32145 / OM5</strain>
    </source>
</reference>
<reference key="2">
    <citation type="journal article" date="2011" name="J. Bacteriol.">
        <title>Complete genome sequences of the chemolithoautotrophic Oligotropha carboxidovorans strains OM4 and OM5.</title>
        <authorList>
            <person name="Volland S."/>
            <person name="Rachinger M."/>
            <person name="Strittmatter A."/>
            <person name="Daniel R."/>
            <person name="Gottschalk G."/>
            <person name="Meyer O."/>
        </authorList>
    </citation>
    <scope>NUCLEOTIDE SEQUENCE [LARGE SCALE GENOMIC DNA]</scope>
    <source>
        <strain>ATCC 49405 / DSM 1227 / KCTC 32145 / OM5</strain>
    </source>
</reference>
<dbReference type="EMBL" id="CP001196">
    <property type="protein sequence ID" value="ACI94646.1"/>
    <property type="molecule type" value="Genomic_DNA"/>
</dbReference>
<dbReference type="EMBL" id="CP002826">
    <property type="protein sequence ID" value="AEI05320.1"/>
    <property type="molecule type" value="Genomic_DNA"/>
</dbReference>
<dbReference type="RefSeq" id="WP_012564670.1">
    <property type="nucleotide sequence ID" value="NC_015684.1"/>
</dbReference>
<dbReference type="SMR" id="B6JJQ2"/>
<dbReference type="STRING" id="504832.OCA5_c05960"/>
<dbReference type="KEGG" id="oca:OCAR_7544"/>
<dbReference type="KEGG" id="ocg:OCA5_c05960"/>
<dbReference type="PATRIC" id="fig|504832.7.peg.624"/>
<dbReference type="eggNOG" id="COG0718">
    <property type="taxonomic scope" value="Bacteria"/>
</dbReference>
<dbReference type="HOGENOM" id="CLU_140930_0_1_5"/>
<dbReference type="OrthoDB" id="9803080at2"/>
<dbReference type="Proteomes" id="UP000007730">
    <property type="component" value="Chromosome"/>
</dbReference>
<dbReference type="GO" id="GO:0043590">
    <property type="term" value="C:bacterial nucleoid"/>
    <property type="evidence" value="ECO:0007669"/>
    <property type="project" value="UniProtKB-UniRule"/>
</dbReference>
<dbReference type="GO" id="GO:0005829">
    <property type="term" value="C:cytosol"/>
    <property type="evidence" value="ECO:0007669"/>
    <property type="project" value="TreeGrafter"/>
</dbReference>
<dbReference type="GO" id="GO:0003677">
    <property type="term" value="F:DNA binding"/>
    <property type="evidence" value="ECO:0007669"/>
    <property type="project" value="UniProtKB-UniRule"/>
</dbReference>
<dbReference type="Gene3D" id="3.30.1310.10">
    <property type="entry name" value="Nucleoid-associated protein YbaB-like domain"/>
    <property type="match status" value="1"/>
</dbReference>
<dbReference type="HAMAP" id="MF_00274">
    <property type="entry name" value="DNA_YbaB_EbfC"/>
    <property type="match status" value="1"/>
</dbReference>
<dbReference type="InterPro" id="IPR036894">
    <property type="entry name" value="YbaB-like_sf"/>
</dbReference>
<dbReference type="InterPro" id="IPR004401">
    <property type="entry name" value="YbaB/EbfC"/>
</dbReference>
<dbReference type="NCBIfam" id="TIGR00103">
    <property type="entry name" value="DNA_YbaB_EbfC"/>
    <property type="match status" value="1"/>
</dbReference>
<dbReference type="PANTHER" id="PTHR33449">
    <property type="entry name" value="NUCLEOID-ASSOCIATED PROTEIN YBAB"/>
    <property type="match status" value="1"/>
</dbReference>
<dbReference type="PANTHER" id="PTHR33449:SF1">
    <property type="entry name" value="NUCLEOID-ASSOCIATED PROTEIN YBAB"/>
    <property type="match status" value="1"/>
</dbReference>
<dbReference type="Pfam" id="PF02575">
    <property type="entry name" value="YbaB_DNA_bd"/>
    <property type="match status" value="1"/>
</dbReference>
<dbReference type="PIRSF" id="PIRSF004555">
    <property type="entry name" value="UCP004555"/>
    <property type="match status" value="1"/>
</dbReference>
<dbReference type="SUPFAM" id="SSF82607">
    <property type="entry name" value="YbaB-like"/>
    <property type="match status" value="1"/>
</dbReference>
<feature type="chain" id="PRO_1000114628" description="Nucleoid-associated protein OCAR_7544/OCA5_c05960">
    <location>
        <begin position="1"/>
        <end position="105"/>
    </location>
</feature>
<organism>
    <name type="scientific">Afipia carboxidovorans (strain ATCC 49405 / DSM 1227 / KCTC 32145 / OM5)</name>
    <name type="common">Oligotropha carboxidovorans</name>
    <dbReference type="NCBI Taxonomy" id="504832"/>
    <lineage>
        <taxon>Bacteria</taxon>
        <taxon>Pseudomonadati</taxon>
        <taxon>Pseudomonadota</taxon>
        <taxon>Alphaproteobacteria</taxon>
        <taxon>Hyphomicrobiales</taxon>
        <taxon>Nitrobacteraceae</taxon>
        <taxon>Afipia</taxon>
    </lineage>
</organism>